<proteinExistence type="inferred from homology"/>
<sequence length="158" mass="18087">MYILTDKVATELKKPFGKVYKELNSIEGKVISIGDVTTKHLLSNGIVPDLSILDFKTKRNVPVEIPHKFKTVFEVYNPPGYISDEAIERIKYLSTIDDRDMALIVKGEEDLLTLPVIKYFPEDTSVIYGQPDEGMVVLKITKELKQKIEKLLKDMEER</sequence>
<organism>
    <name type="scientific">Methanococcus vannielii (strain ATCC 35089 / DSM 1224 / JCM 13029 / OCM 148 / SB)</name>
    <dbReference type="NCBI Taxonomy" id="406327"/>
    <lineage>
        <taxon>Archaea</taxon>
        <taxon>Methanobacteriati</taxon>
        <taxon>Methanobacteriota</taxon>
        <taxon>Methanomada group</taxon>
        <taxon>Methanococci</taxon>
        <taxon>Methanococcales</taxon>
        <taxon>Methanococcaceae</taxon>
        <taxon>Methanococcus</taxon>
    </lineage>
</organism>
<keyword id="KW-0173">Coenzyme A biosynthesis</keyword>
<keyword id="KW-0342">GTP-binding</keyword>
<keyword id="KW-0418">Kinase</keyword>
<keyword id="KW-0547">Nucleotide-binding</keyword>
<keyword id="KW-0808">Transferase</keyword>
<feature type="chain" id="PRO_1000025493" description="GTP-dependent dephospho-CoA kinase">
    <location>
        <begin position="1"/>
        <end position="158"/>
    </location>
</feature>
<feature type="binding site" evidence="1">
    <location>
        <position position="35"/>
    </location>
    <ligand>
        <name>GTP</name>
        <dbReference type="ChEBI" id="CHEBI:37565"/>
    </ligand>
</feature>
<feature type="binding site" evidence="1">
    <location>
        <position position="36"/>
    </location>
    <ligand>
        <name>GTP</name>
        <dbReference type="ChEBI" id="CHEBI:37565"/>
    </ligand>
</feature>
<feature type="binding site" evidence="1">
    <location>
        <position position="54"/>
    </location>
    <ligand>
        <name>GTP</name>
        <dbReference type="ChEBI" id="CHEBI:37565"/>
    </ligand>
</feature>
<feature type="binding site" evidence="1">
    <location>
        <position position="56"/>
    </location>
    <ligand>
        <name>GTP</name>
        <dbReference type="ChEBI" id="CHEBI:37565"/>
    </ligand>
</feature>
<feature type="binding site" evidence="1">
    <location>
        <position position="109"/>
    </location>
    <ligand>
        <name>GTP</name>
        <dbReference type="ChEBI" id="CHEBI:37565"/>
    </ligand>
</feature>
<feature type="binding site" evidence="1">
    <location>
        <position position="132"/>
    </location>
    <ligand>
        <name>GTP</name>
        <dbReference type="ChEBI" id="CHEBI:37565"/>
    </ligand>
</feature>
<gene>
    <name type="ordered locus">Mevan_1427</name>
</gene>
<comment type="function">
    <text evidence="1">Catalyzes the GTP-dependent phosphorylation of the 3'-hydroxyl group of dephosphocoenzyme A to form coenzyme A (CoA).</text>
</comment>
<comment type="catalytic activity">
    <reaction evidence="1">
        <text>3'-dephospho-CoA + GTP = GDP + CoA + H(+)</text>
        <dbReference type="Rhea" id="RHEA:61156"/>
        <dbReference type="ChEBI" id="CHEBI:15378"/>
        <dbReference type="ChEBI" id="CHEBI:37565"/>
        <dbReference type="ChEBI" id="CHEBI:57287"/>
        <dbReference type="ChEBI" id="CHEBI:57328"/>
        <dbReference type="ChEBI" id="CHEBI:58189"/>
        <dbReference type="EC" id="2.7.1.237"/>
    </reaction>
</comment>
<comment type="pathway">
    <text evidence="1">Cofactor biosynthesis; coenzyme A biosynthesis.</text>
</comment>
<comment type="similarity">
    <text evidence="1">Belongs to the GTP-dependent DPCK family.</text>
</comment>
<name>DPCKG_METVS</name>
<protein>
    <recommendedName>
        <fullName evidence="1">GTP-dependent dephospho-CoA kinase</fullName>
        <ecNumber evidence="1">2.7.1.237</ecNumber>
    </recommendedName>
    <alternativeName>
        <fullName evidence="1">Dephospho-coenzyme A kinase</fullName>
        <shortName evidence="1">DPCK</shortName>
    </alternativeName>
</protein>
<evidence type="ECO:0000255" key="1">
    <source>
        <dbReference type="HAMAP-Rule" id="MF_00590"/>
    </source>
</evidence>
<accession>A6US51</accession>
<dbReference type="EC" id="2.7.1.237" evidence="1"/>
<dbReference type="EMBL" id="CP000742">
    <property type="protein sequence ID" value="ABR55323.1"/>
    <property type="molecule type" value="Genomic_DNA"/>
</dbReference>
<dbReference type="RefSeq" id="WP_012066237.1">
    <property type="nucleotide sequence ID" value="NC_009634.1"/>
</dbReference>
<dbReference type="SMR" id="A6US51"/>
<dbReference type="STRING" id="406327.Mevan_1427"/>
<dbReference type="GeneID" id="5325152"/>
<dbReference type="KEGG" id="mvn:Mevan_1427"/>
<dbReference type="eggNOG" id="arCOG04076">
    <property type="taxonomic scope" value="Archaea"/>
</dbReference>
<dbReference type="HOGENOM" id="CLU_120795_1_0_2"/>
<dbReference type="OrthoDB" id="15447at2157"/>
<dbReference type="UniPathway" id="UPA00241"/>
<dbReference type="Proteomes" id="UP000001107">
    <property type="component" value="Chromosome"/>
</dbReference>
<dbReference type="GO" id="GO:0005525">
    <property type="term" value="F:GTP binding"/>
    <property type="evidence" value="ECO:0007669"/>
    <property type="project" value="UniProtKB-UniRule"/>
</dbReference>
<dbReference type="GO" id="GO:0016301">
    <property type="term" value="F:kinase activity"/>
    <property type="evidence" value="ECO:0007669"/>
    <property type="project" value="UniProtKB-UniRule"/>
</dbReference>
<dbReference type="GO" id="GO:0015937">
    <property type="term" value="P:coenzyme A biosynthetic process"/>
    <property type="evidence" value="ECO:0007669"/>
    <property type="project" value="UniProtKB-UniRule"/>
</dbReference>
<dbReference type="HAMAP" id="MF_00590">
    <property type="entry name" value="Dephospho_CoA_kinase_GTP_dep"/>
    <property type="match status" value="1"/>
</dbReference>
<dbReference type="InterPro" id="IPR007164">
    <property type="entry name" value="GTP-dep_dephospho-CoA_kin"/>
</dbReference>
<dbReference type="PANTHER" id="PTHR40732:SF1">
    <property type="entry name" value="GTP-DEPENDENT DEPHOSPHO-COA KINASE"/>
    <property type="match status" value="1"/>
</dbReference>
<dbReference type="PANTHER" id="PTHR40732">
    <property type="entry name" value="UPF0218 PROTEIN TK1697"/>
    <property type="match status" value="1"/>
</dbReference>
<dbReference type="Pfam" id="PF04019">
    <property type="entry name" value="DUF359"/>
    <property type="match status" value="1"/>
</dbReference>
<dbReference type="PIRSF" id="PIRSF006533">
    <property type="entry name" value="UCP006533"/>
    <property type="match status" value="1"/>
</dbReference>
<reference key="1">
    <citation type="submission" date="2007-06" db="EMBL/GenBank/DDBJ databases">
        <title>Complete sequence of Methanococcus vannielii SB.</title>
        <authorList>
            <consortium name="US DOE Joint Genome Institute"/>
            <person name="Copeland A."/>
            <person name="Lucas S."/>
            <person name="Lapidus A."/>
            <person name="Barry K."/>
            <person name="Glavina del Rio T."/>
            <person name="Dalin E."/>
            <person name="Tice H."/>
            <person name="Pitluck S."/>
            <person name="Chain P."/>
            <person name="Malfatti S."/>
            <person name="Shin M."/>
            <person name="Vergez L."/>
            <person name="Schmutz J."/>
            <person name="Larimer F."/>
            <person name="Land M."/>
            <person name="Hauser L."/>
            <person name="Kyrpides N."/>
            <person name="Anderson I."/>
            <person name="Sieprawska-Lupa M."/>
            <person name="Whitman W.B."/>
            <person name="Richardson P."/>
        </authorList>
    </citation>
    <scope>NUCLEOTIDE SEQUENCE [LARGE SCALE GENOMIC DNA]</scope>
    <source>
        <strain>ATCC 35089 / DSM 1224 / JCM 13029 / OCM 148 / SB</strain>
    </source>
</reference>